<reference key="1">
    <citation type="journal article" date="2007" name="J. Exp. Zool. B Mol. Dev. Evol.">
        <title>Venomous auger snail Hastula (Impages) hectica (Linnaeus, 1758): molecular phylogeny, foregut anatomy and comparative toxinology.</title>
        <authorList>
            <person name="Imperial J.S."/>
            <person name="Kantor Y."/>
            <person name="Watkins M."/>
            <person name="Heralde F.M. III"/>
            <person name="Stevenson B."/>
            <person name="Chen P."/>
            <person name="Hansson K."/>
            <person name="Stenflo J."/>
            <person name="Ownby J.P."/>
            <person name="Bouchet P."/>
            <person name="Olivera B.M."/>
        </authorList>
    </citation>
    <scope>PROTEIN SEQUENCE</scope>
    <scope>SUBCELLULAR LOCATION</scope>
    <source>
        <tissue>Venom</tissue>
    </source>
</reference>
<comment type="subcellular location">
    <subcellularLocation>
        <location evidence="2">Secreted</location>
    </subcellularLocation>
</comment>
<comment type="tissue specificity">
    <text evidence="4">Expressed by the venom duct.</text>
</comment>
<comment type="domain">
    <text evidence="3">The cysteine framework is XVI (C-C-CC).</text>
</comment>
<keyword id="KW-0903">Direct protein sequencing</keyword>
<keyword id="KW-1015">Disulfide bond</keyword>
<keyword id="KW-0964">Secreted</keyword>
<keyword id="KW-0800">Toxin</keyword>
<protein>
    <recommendedName>
        <fullName>Augerpeptide hheTx1</fullName>
    </recommendedName>
</protein>
<evidence type="ECO:0000250" key="1">
    <source>
        <dbReference type="UniProtKB" id="P0DJC3"/>
    </source>
</evidence>
<evidence type="ECO:0000269" key="2">
    <source>
    </source>
</evidence>
<evidence type="ECO:0000305" key="3"/>
<evidence type="ECO:0000305" key="4">
    <source>
    </source>
</evidence>
<feature type="peptide" id="PRO_0000402153" description="Augerpeptide hheTx1" evidence="2">
    <location>
        <begin position="1"/>
        <end position="11"/>
    </location>
</feature>
<feature type="disulfide bond" evidence="1">
    <location>
        <begin position="2"/>
        <end position="11"/>
    </location>
</feature>
<feature type="disulfide bond" evidence="1">
    <location>
        <begin position="5"/>
        <end position="10"/>
    </location>
</feature>
<proteinExistence type="evidence at protein level"/>
<dbReference type="GO" id="GO:0005576">
    <property type="term" value="C:extracellular region"/>
    <property type="evidence" value="ECO:0007669"/>
    <property type="project" value="UniProtKB-SubCell"/>
</dbReference>
<dbReference type="GO" id="GO:0090729">
    <property type="term" value="F:toxin activity"/>
    <property type="evidence" value="ECO:0007669"/>
    <property type="project" value="UniProtKB-KW"/>
</dbReference>
<accession>P0CI07</accession>
<sequence length="11" mass="1164">DCLPCGHDVCC</sequence>
<organism>
    <name type="scientific">Hastula hectica</name>
    <name type="common">Sea snail</name>
    <name type="synonym">Impages hectica</name>
    <dbReference type="NCBI Taxonomy" id="745793"/>
    <lineage>
        <taxon>Eukaryota</taxon>
        <taxon>Metazoa</taxon>
        <taxon>Spiralia</taxon>
        <taxon>Lophotrochozoa</taxon>
        <taxon>Mollusca</taxon>
        <taxon>Gastropoda</taxon>
        <taxon>Caenogastropoda</taxon>
        <taxon>Neogastropoda</taxon>
        <taxon>Conoidea</taxon>
        <taxon>Terebridae</taxon>
        <taxon>Hastula</taxon>
    </lineage>
</organism>
<name>TEG1_HASHE</name>